<protein>
    <recommendedName>
        <fullName evidence="1">Shikimate kinase 1</fullName>
        <shortName evidence="1">SK 1</shortName>
        <ecNumber evidence="1">2.7.1.71</ecNumber>
    </recommendedName>
</protein>
<evidence type="ECO:0000255" key="1">
    <source>
        <dbReference type="HAMAP-Rule" id="MF_00109"/>
    </source>
</evidence>
<feature type="chain" id="PRO_1000057725" description="Shikimate kinase 1">
    <location>
        <begin position="1"/>
        <end position="173"/>
    </location>
</feature>
<feature type="binding site" evidence="1">
    <location>
        <begin position="14"/>
        <end position="19"/>
    </location>
    <ligand>
        <name>ATP</name>
        <dbReference type="ChEBI" id="CHEBI:30616"/>
    </ligand>
</feature>
<feature type="binding site" evidence="1">
    <location>
        <position position="18"/>
    </location>
    <ligand>
        <name>Mg(2+)</name>
        <dbReference type="ChEBI" id="CHEBI:18420"/>
    </ligand>
</feature>
<feature type="binding site" evidence="1">
    <location>
        <position position="36"/>
    </location>
    <ligand>
        <name>substrate</name>
    </ligand>
</feature>
<feature type="binding site" evidence="1">
    <location>
        <position position="60"/>
    </location>
    <ligand>
        <name>substrate</name>
    </ligand>
</feature>
<feature type="binding site" evidence="1">
    <location>
        <position position="82"/>
    </location>
    <ligand>
        <name>substrate</name>
    </ligand>
</feature>
<feature type="binding site" evidence="1">
    <location>
        <position position="120"/>
    </location>
    <ligand>
        <name>ATP</name>
        <dbReference type="ChEBI" id="CHEBI:30616"/>
    </ligand>
</feature>
<feature type="binding site" evidence="1">
    <location>
        <position position="140"/>
    </location>
    <ligand>
        <name>substrate</name>
    </ligand>
</feature>
<feature type="binding site" evidence="1">
    <location>
        <position position="157"/>
    </location>
    <ligand>
        <name>ATP</name>
        <dbReference type="ChEBI" id="CHEBI:30616"/>
    </ligand>
</feature>
<keyword id="KW-0028">Amino-acid biosynthesis</keyword>
<keyword id="KW-0057">Aromatic amino acid biosynthesis</keyword>
<keyword id="KW-0067">ATP-binding</keyword>
<keyword id="KW-0963">Cytoplasm</keyword>
<keyword id="KW-0418">Kinase</keyword>
<keyword id="KW-0460">Magnesium</keyword>
<keyword id="KW-0479">Metal-binding</keyword>
<keyword id="KW-0547">Nucleotide-binding</keyword>
<keyword id="KW-0808">Transferase</keyword>
<proteinExistence type="inferred from homology"/>
<dbReference type="EC" id="2.7.1.71" evidence="1"/>
<dbReference type="EMBL" id="CP000653">
    <property type="protein sequence ID" value="ABP62458.1"/>
    <property type="molecule type" value="Genomic_DNA"/>
</dbReference>
<dbReference type="RefSeq" id="WP_015960764.1">
    <property type="nucleotide sequence ID" value="NC_009436.1"/>
</dbReference>
<dbReference type="SMR" id="A4WFH8"/>
<dbReference type="STRING" id="399742.Ent638_3803"/>
<dbReference type="GeneID" id="93306779"/>
<dbReference type="KEGG" id="ent:Ent638_3803"/>
<dbReference type="eggNOG" id="COG0703">
    <property type="taxonomic scope" value="Bacteria"/>
</dbReference>
<dbReference type="HOGENOM" id="CLU_057607_2_2_6"/>
<dbReference type="OrthoDB" id="9800332at2"/>
<dbReference type="UniPathway" id="UPA00053">
    <property type="reaction ID" value="UER00088"/>
</dbReference>
<dbReference type="Proteomes" id="UP000000230">
    <property type="component" value="Chromosome"/>
</dbReference>
<dbReference type="GO" id="GO:0005829">
    <property type="term" value="C:cytosol"/>
    <property type="evidence" value="ECO:0007669"/>
    <property type="project" value="TreeGrafter"/>
</dbReference>
<dbReference type="GO" id="GO:0005524">
    <property type="term" value="F:ATP binding"/>
    <property type="evidence" value="ECO:0007669"/>
    <property type="project" value="UniProtKB-UniRule"/>
</dbReference>
<dbReference type="GO" id="GO:0000287">
    <property type="term" value="F:magnesium ion binding"/>
    <property type="evidence" value="ECO:0007669"/>
    <property type="project" value="UniProtKB-UniRule"/>
</dbReference>
<dbReference type="GO" id="GO:0004765">
    <property type="term" value="F:shikimate kinase activity"/>
    <property type="evidence" value="ECO:0007669"/>
    <property type="project" value="UniProtKB-UniRule"/>
</dbReference>
<dbReference type="GO" id="GO:0008652">
    <property type="term" value="P:amino acid biosynthetic process"/>
    <property type="evidence" value="ECO:0007669"/>
    <property type="project" value="UniProtKB-KW"/>
</dbReference>
<dbReference type="GO" id="GO:0009073">
    <property type="term" value="P:aromatic amino acid family biosynthetic process"/>
    <property type="evidence" value="ECO:0007669"/>
    <property type="project" value="UniProtKB-KW"/>
</dbReference>
<dbReference type="GO" id="GO:0009423">
    <property type="term" value="P:chorismate biosynthetic process"/>
    <property type="evidence" value="ECO:0007669"/>
    <property type="project" value="UniProtKB-UniRule"/>
</dbReference>
<dbReference type="CDD" id="cd00464">
    <property type="entry name" value="SK"/>
    <property type="match status" value="1"/>
</dbReference>
<dbReference type="FunFam" id="3.40.50.300:FF:000099">
    <property type="entry name" value="Shikimate kinase 1"/>
    <property type="match status" value="1"/>
</dbReference>
<dbReference type="Gene3D" id="3.40.50.300">
    <property type="entry name" value="P-loop containing nucleotide triphosphate hydrolases"/>
    <property type="match status" value="1"/>
</dbReference>
<dbReference type="HAMAP" id="MF_00109">
    <property type="entry name" value="Shikimate_kinase"/>
    <property type="match status" value="1"/>
</dbReference>
<dbReference type="InterPro" id="IPR027417">
    <property type="entry name" value="P-loop_NTPase"/>
</dbReference>
<dbReference type="InterPro" id="IPR031322">
    <property type="entry name" value="Shikimate/glucono_kinase"/>
</dbReference>
<dbReference type="InterPro" id="IPR000623">
    <property type="entry name" value="Shikimate_kinase/TSH1"/>
</dbReference>
<dbReference type="InterPro" id="IPR023000">
    <property type="entry name" value="Shikimate_kinase_CS"/>
</dbReference>
<dbReference type="NCBIfam" id="NF003456">
    <property type="entry name" value="PRK05057.1"/>
    <property type="match status" value="1"/>
</dbReference>
<dbReference type="PANTHER" id="PTHR21087">
    <property type="entry name" value="SHIKIMATE KINASE"/>
    <property type="match status" value="1"/>
</dbReference>
<dbReference type="PANTHER" id="PTHR21087:SF16">
    <property type="entry name" value="SHIKIMATE KINASE 1, CHLOROPLASTIC"/>
    <property type="match status" value="1"/>
</dbReference>
<dbReference type="Pfam" id="PF01202">
    <property type="entry name" value="SKI"/>
    <property type="match status" value="1"/>
</dbReference>
<dbReference type="PRINTS" id="PR01100">
    <property type="entry name" value="SHIKIMTKNASE"/>
</dbReference>
<dbReference type="SUPFAM" id="SSF52540">
    <property type="entry name" value="P-loop containing nucleoside triphosphate hydrolases"/>
    <property type="match status" value="1"/>
</dbReference>
<dbReference type="PROSITE" id="PS01128">
    <property type="entry name" value="SHIKIMATE_KINASE"/>
    <property type="match status" value="1"/>
</dbReference>
<organism>
    <name type="scientific">Enterobacter sp. (strain 638)</name>
    <dbReference type="NCBI Taxonomy" id="399742"/>
    <lineage>
        <taxon>Bacteria</taxon>
        <taxon>Pseudomonadati</taxon>
        <taxon>Pseudomonadota</taxon>
        <taxon>Gammaproteobacteria</taxon>
        <taxon>Enterobacterales</taxon>
        <taxon>Enterobacteriaceae</taxon>
        <taxon>Enterobacter</taxon>
    </lineage>
</organism>
<accession>A4WFH8</accession>
<reference key="1">
    <citation type="journal article" date="2010" name="PLoS Genet.">
        <title>Genome sequence of the plant growth promoting endophytic bacterium Enterobacter sp. 638.</title>
        <authorList>
            <person name="Taghavi S."/>
            <person name="van der Lelie D."/>
            <person name="Hoffman A."/>
            <person name="Zhang Y.B."/>
            <person name="Walla M.D."/>
            <person name="Vangronsveld J."/>
            <person name="Newman L."/>
            <person name="Monchy S."/>
        </authorList>
    </citation>
    <scope>NUCLEOTIDE SEQUENCE [LARGE SCALE GENOMIC DNA]</scope>
    <source>
        <strain>638</strain>
    </source>
</reference>
<name>AROK_ENT38</name>
<comment type="function">
    <text evidence="1">Catalyzes the specific phosphorylation of the 3-hydroxyl group of shikimic acid using ATP as a cosubstrate.</text>
</comment>
<comment type="catalytic activity">
    <reaction evidence="1">
        <text>shikimate + ATP = 3-phosphoshikimate + ADP + H(+)</text>
        <dbReference type="Rhea" id="RHEA:13121"/>
        <dbReference type="ChEBI" id="CHEBI:15378"/>
        <dbReference type="ChEBI" id="CHEBI:30616"/>
        <dbReference type="ChEBI" id="CHEBI:36208"/>
        <dbReference type="ChEBI" id="CHEBI:145989"/>
        <dbReference type="ChEBI" id="CHEBI:456216"/>
        <dbReference type="EC" id="2.7.1.71"/>
    </reaction>
</comment>
<comment type="cofactor">
    <cofactor evidence="1">
        <name>Mg(2+)</name>
        <dbReference type="ChEBI" id="CHEBI:18420"/>
    </cofactor>
    <text evidence="1">Binds 1 Mg(2+) ion per subunit.</text>
</comment>
<comment type="pathway">
    <text evidence="1">Metabolic intermediate biosynthesis; chorismate biosynthesis; chorismate from D-erythrose 4-phosphate and phosphoenolpyruvate: step 5/7.</text>
</comment>
<comment type="subunit">
    <text evidence="1">Monomer.</text>
</comment>
<comment type="subcellular location">
    <subcellularLocation>
        <location evidence="1">Cytoplasm</location>
    </subcellularLocation>
</comment>
<comment type="similarity">
    <text evidence="1">Belongs to the shikimate kinase family.</text>
</comment>
<gene>
    <name evidence="1" type="primary">aroK</name>
    <name type="ordered locus">Ent638_3803</name>
</gene>
<sequence length="173" mass="19467">MAEKRNIFLVGPMGAGKSTIGRQLAQQLNMEFYDSDHEIEKRTGADVGWVFDVEGEEGFRDREEKVINELTEKQGIVLATGGGSVKSRETRNRLSARGVVVYLETTIEKQLARTQRDKKRPLLQVETPPREVLEALAGERNPLYEEIADVTIRTDDQSAKVVANQIIHMLESN</sequence>